<accession>Q4VIT5</accession>
<evidence type="ECO:0000250" key="1"/>
<evidence type="ECO:0000250" key="2">
    <source>
        <dbReference type="UniProtKB" id="P14211"/>
    </source>
</evidence>
<evidence type="ECO:0000250" key="3">
    <source>
        <dbReference type="UniProtKB" id="P18418"/>
    </source>
</evidence>
<evidence type="ECO:0000250" key="4">
    <source>
        <dbReference type="UniProtKB" id="P27797"/>
    </source>
</evidence>
<evidence type="ECO:0000250" key="5">
    <source>
        <dbReference type="UniProtKB" id="P28491"/>
    </source>
</evidence>
<evidence type="ECO:0000250" key="6">
    <source>
        <dbReference type="UniProtKB" id="Q8K3H7"/>
    </source>
</evidence>
<evidence type="ECO:0000255" key="7">
    <source>
        <dbReference type="PROSITE-ProRule" id="PRU10138"/>
    </source>
</evidence>
<evidence type="ECO:0000256" key="8">
    <source>
        <dbReference type="SAM" id="MobiDB-lite"/>
    </source>
</evidence>
<evidence type="ECO:0000305" key="9"/>
<protein>
    <recommendedName>
        <fullName>Calreticulin</fullName>
    </recommendedName>
</protein>
<gene>
    <name type="primary">CALR</name>
</gene>
<name>CALR_CHLAE</name>
<comment type="function">
    <text evidence="4">Calcium-binding chaperone that promotes folding, oligomeric assembly and quality control in the endoplasmic reticulum (ER) via the calreticulin/calnexin cycle. This lectin interacts transiently with almost all of the monoglucosylated glycoproteins that are synthesized in the ER. Interacts with the DNA-binding domain of NR3C1 and mediates its nuclear export. Involved in maternal gene expression regulation. May participate in oocyte maturation via the regulation of calcium homeostasis.</text>
</comment>
<comment type="subunit">
    <text evidence="2 3 4">Monomer. Component of an EIF2 complex at least composed of CELF1/CUGBP1, CALR, CALR3, EIF2S1, EIF2S2, HSP90B1 and HSPA5. Interacts with PDIA3/ERp57 and SPACA9 (By similarity). Interacts with TRIM21. Interacts with NR3C1. Interacts with PPIB. Interacts (via P-domain) with PDIA5. Interacts with GABARAP. Interacts with CLCC1.</text>
</comment>
<comment type="subcellular location">
    <subcellularLocation>
        <location evidence="4">Endoplasmic reticulum lumen</location>
    </subcellularLocation>
    <subcellularLocation>
        <location evidence="4">Cytoplasm</location>
        <location evidence="4">Cytosol</location>
    </subcellularLocation>
    <subcellularLocation>
        <location evidence="4">Secreted</location>
        <location evidence="4">Extracellular space</location>
        <location evidence="4">Extracellular matrix</location>
    </subcellularLocation>
    <subcellularLocation>
        <location evidence="4">Cell surface</location>
    </subcellularLocation>
    <subcellularLocation>
        <location evidence="5">Sarcoplasmic reticulum lumen</location>
    </subcellularLocation>
    <subcellularLocation>
        <location evidence="6">Cytoplasmic vesicle</location>
        <location evidence="6">Secretory vesicle</location>
        <location evidence="6">Cortical granule</location>
    </subcellularLocation>
    <subcellularLocation>
        <location evidence="4">Cytoplasmic granule</location>
    </subcellularLocation>
    <text evidence="4 5 6">Also found in cell surface (T cells), cytosol and extracellular matrix. Associated with the lytic granules in the cytolytic T-lymphocytes (By similarity). During oocyte maturation and after parthenogenetic activation accumulates in cortical granules. In pronuclear and early cleaved embryos localizes weakly to cytoplasm around nucleus and more strongly in the region near the cortex (By similarity). In cortical granules of non-activated oocytes, is exocytosed during the cortical reaction in response to oocyte activation (By similarity).</text>
</comment>
<comment type="domain">
    <text evidence="1">Can be divided into a N-terminal globular domain, a proline-rich P-domain forming an elongated arm-like structure and a C-terminal acidic domain. The P-domain binds one molecule of calcium with high affinity, whereas the acidic C-domain binds multiple calcium ions with low affinity (By similarity).</text>
</comment>
<comment type="domain">
    <text evidence="1">The interaction with glycans occurs through a binding site in the globular lectin domain.</text>
</comment>
<comment type="domain">
    <text evidence="1">The zinc binding sites are localized to the N-domain.</text>
</comment>
<comment type="domain">
    <text evidence="1">Associates with PDIA3 through the tip of the extended arm formed by the P-domain.</text>
</comment>
<comment type="similarity">
    <text evidence="9">Belongs to the calreticulin family.</text>
</comment>
<organism>
    <name type="scientific">Chlorocebus aethiops</name>
    <name type="common">Green monkey</name>
    <name type="synonym">Cercopithecus aethiops</name>
    <dbReference type="NCBI Taxonomy" id="9534"/>
    <lineage>
        <taxon>Eukaryota</taxon>
        <taxon>Metazoa</taxon>
        <taxon>Chordata</taxon>
        <taxon>Craniata</taxon>
        <taxon>Vertebrata</taxon>
        <taxon>Euteleostomi</taxon>
        <taxon>Mammalia</taxon>
        <taxon>Eutheria</taxon>
        <taxon>Euarchontoglires</taxon>
        <taxon>Primates</taxon>
        <taxon>Haplorrhini</taxon>
        <taxon>Catarrhini</taxon>
        <taxon>Cercopithecidae</taxon>
        <taxon>Cercopithecinae</taxon>
        <taxon>Chlorocebus</taxon>
    </lineage>
</organism>
<reference key="1">
    <citation type="journal article" date="2005" name="J. Immunol.">
        <title>A mutant cell with a novel defect in MHC class I quality control.</title>
        <authorList>
            <person name="York I.A."/>
            <person name="Grant E.P."/>
            <person name="Dahl A.M."/>
            <person name="Rock K.L."/>
        </authorList>
    </citation>
    <scope>NUCLEOTIDE SEQUENCE [MRNA]</scope>
</reference>
<feature type="signal peptide" evidence="1">
    <location>
        <begin position="1"/>
        <end position="17"/>
    </location>
</feature>
<feature type="chain" id="PRO_0000246152" description="Calreticulin">
    <location>
        <begin position="18"/>
        <end position="417"/>
    </location>
</feature>
<feature type="repeat" description="1-1">
    <location>
        <begin position="191"/>
        <end position="202"/>
    </location>
</feature>
<feature type="repeat" description="1-2">
    <location>
        <begin position="210"/>
        <end position="221"/>
    </location>
</feature>
<feature type="repeat" description="1-3">
    <location>
        <begin position="227"/>
        <end position="238"/>
    </location>
</feature>
<feature type="repeat" description="1-4">
    <location>
        <begin position="244"/>
        <end position="255"/>
    </location>
</feature>
<feature type="repeat" description="2-1">
    <location>
        <begin position="259"/>
        <end position="269"/>
    </location>
</feature>
<feature type="repeat" description="2-2">
    <location>
        <begin position="273"/>
        <end position="283"/>
    </location>
</feature>
<feature type="repeat" description="2-3">
    <location>
        <begin position="287"/>
        <end position="297"/>
    </location>
</feature>
<feature type="region of interest" description="N-domain">
    <location>
        <begin position="18"/>
        <end position="197"/>
    </location>
</feature>
<feature type="region of interest" description="4 X approximate repeats">
    <location>
        <begin position="191"/>
        <end position="255"/>
    </location>
</feature>
<feature type="region of interest" description="Disordered" evidence="8">
    <location>
        <begin position="193"/>
        <end position="278"/>
    </location>
</feature>
<feature type="region of interest" description="P-domain">
    <location>
        <begin position="198"/>
        <end position="308"/>
    </location>
</feature>
<feature type="region of interest" description="Interaction with PPIB" evidence="1">
    <location>
        <begin position="237"/>
        <end position="270"/>
    </location>
</feature>
<feature type="region of interest" description="3 X approximate repeats">
    <location>
        <begin position="259"/>
        <end position="297"/>
    </location>
</feature>
<feature type="region of interest" description="C-domain">
    <location>
        <begin position="309"/>
        <end position="417"/>
    </location>
</feature>
<feature type="region of interest" description="Disordered" evidence="8">
    <location>
        <begin position="350"/>
        <end position="417"/>
    </location>
</feature>
<feature type="short sequence motif" description="Prevents secretion from ER" evidence="7">
    <location>
        <begin position="414"/>
        <end position="417"/>
    </location>
</feature>
<feature type="compositionally biased region" description="Basic and acidic residues" evidence="8">
    <location>
        <begin position="207"/>
        <end position="251"/>
    </location>
</feature>
<feature type="compositionally biased region" description="Acidic residues" evidence="8">
    <location>
        <begin position="252"/>
        <end position="261"/>
    </location>
</feature>
<feature type="compositionally biased region" description="Basic and acidic residues" evidence="8">
    <location>
        <begin position="352"/>
        <end position="379"/>
    </location>
</feature>
<feature type="compositionally biased region" description="Acidic residues" evidence="8">
    <location>
        <begin position="380"/>
        <end position="409"/>
    </location>
</feature>
<feature type="binding site" evidence="1">
    <location>
        <position position="26"/>
    </location>
    <ligand>
        <name>Ca(2+)</name>
        <dbReference type="ChEBI" id="CHEBI:29108"/>
    </ligand>
</feature>
<feature type="binding site" evidence="1">
    <location>
        <position position="62"/>
    </location>
    <ligand>
        <name>Ca(2+)</name>
        <dbReference type="ChEBI" id="CHEBI:29108"/>
    </ligand>
</feature>
<feature type="binding site" evidence="1">
    <location>
        <position position="64"/>
    </location>
    <ligand>
        <name>Ca(2+)</name>
        <dbReference type="ChEBI" id="CHEBI:29108"/>
    </ligand>
</feature>
<feature type="binding site" evidence="2">
    <location>
        <position position="109"/>
    </location>
    <ligand>
        <name>an alpha-D-glucoside</name>
        <dbReference type="ChEBI" id="CHEBI:22390"/>
    </ligand>
</feature>
<feature type="binding site" evidence="2">
    <location>
        <position position="111"/>
    </location>
    <ligand>
        <name>an alpha-D-glucoside</name>
        <dbReference type="ChEBI" id="CHEBI:22390"/>
    </ligand>
</feature>
<feature type="binding site" evidence="2">
    <location>
        <position position="128"/>
    </location>
    <ligand>
        <name>an alpha-D-glucoside</name>
        <dbReference type="ChEBI" id="CHEBI:22390"/>
    </ligand>
</feature>
<feature type="binding site" evidence="2">
    <location>
        <position position="135"/>
    </location>
    <ligand>
        <name>an alpha-D-glucoside</name>
        <dbReference type="ChEBI" id="CHEBI:22390"/>
    </ligand>
</feature>
<feature type="binding site" evidence="2">
    <location>
        <position position="317"/>
    </location>
    <ligand>
        <name>an alpha-D-glucoside</name>
        <dbReference type="ChEBI" id="CHEBI:22390"/>
    </ligand>
</feature>
<feature type="binding site" evidence="1">
    <location>
        <position position="328"/>
    </location>
    <ligand>
        <name>Ca(2+)</name>
        <dbReference type="ChEBI" id="CHEBI:29108"/>
    </ligand>
</feature>
<feature type="modified residue" description="N6-acetyllysine" evidence="4">
    <location>
        <position position="48"/>
    </location>
</feature>
<feature type="modified residue" description="N6-acetyllysine" evidence="4">
    <location>
        <position position="159"/>
    </location>
</feature>
<feature type="modified residue" description="N6-acetyllysine" evidence="4">
    <location>
        <position position="209"/>
    </location>
</feature>
<feature type="disulfide bond" evidence="1">
    <location>
        <begin position="105"/>
        <end position="137"/>
    </location>
</feature>
<keyword id="KW-0007">Acetylation</keyword>
<keyword id="KW-0106">Calcium</keyword>
<keyword id="KW-0143">Chaperone</keyword>
<keyword id="KW-0963">Cytoplasm</keyword>
<keyword id="KW-0968">Cytoplasmic vesicle</keyword>
<keyword id="KW-1015">Disulfide bond</keyword>
<keyword id="KW-0256">Endoplasmic reticulum</keyword>
<keyword id="KW-0272">Extracellular matrix</keyword>
<keyword id="KW-0430">Lectin</keyword>
<keyword id="KW-0479">Metal-binding</keyword>
<keyword id="KW-0677">Repeat</keyword>
<keyword id="KW-0703">Sarcoplasmic reticulum</keyword>
<keyword id="KW-0964">Secreted</keyword>
<keyword id="KW-0732">Signal</keyword>
<keyword id="KW-0862">Zinc</keyword>
<dbReference type="EMBL" id="AY901963">
    <property type="protein sequence ID" value="AAX86983.1"/>
    <property type="molecule type" value="mRNA"/>
</dbReference>
<dbReference type="SMR" id="Q4VIT5"/>
<dbReference type="GO" id="GO:0009986">
    <property type="term" value="C:cell surface"/>
    <property type="evidence" value="ECO:0007669"/>
    <property type="project" value="UniProtKB-SubCell"/>
</dbReference>
<dbReference type="GO" id="GO:0060473">
    <property type="term" value="C:cortical granule"/>
    <property type="evidence" value="ECO:0000250"/>
    <property type="project" value="UniProtKB"/>
</dbReference>
<dbReference type="GO" id="GO:0005829">
    <property type="term" value="C:cytosol"/>
    <property type="evidence" value="ECO:0007669"/>
    <property type="project" value="UniProtKB-SubCell"/>
</dbReference>
<dbReference type="GO" id="GO:0005789">
    <property type="term" value="C:endoplasmic reticulum membrane"/>
    <property type="evidence" value="ECO:0007669"/>
    <property type="project" value="TreeGrafter"/>
</dbReference>
<dbReference type="GO" id="GO:0005576">
    <property type="term" value="C:extracellular region"/>
    <property type="evidence" value="ECO:0007669"/>
    <property type="project" value="UniProtKB-KW"/>
</dbReference>
<dbReference type="GO" id="GO:0033018">
    <property type="term" value="C:sarcoplasmic reticulum lumen"/>
    <property type="evidence" value="ECO:0007669"/>
    <property type="project" value="UniProtKB-SubCell"/>
</dbReference>
<dbReference type="GO" id="GO:0005509">
    <property type="term" value="F:calcium ion binding"/>
    <property type="evidence" value="ECO:0000250"/>
    <property type="project" value="UniProtKB"/>
</dbReference>
<dbReference type="GO" id="GO:0030246">
    <property type="term" value="F:carbohydrate binding"/>
    <property type="evidence" value="ECO:0007669"/>
    <property type="project" value="UniProtKB-KW"/>
</dbReference>
<dbReference type="GO" id="GO:0051082">
    <property type="term" value="F:unfolded protein binding"/>
    <property type="evidence" value="ECO:0007669"/>
    <property type="project" value="InterPro"/>
</dbReference>
<dbReference type="GO" id="GO:0036503">
    <property type="term" value="P:ERAD pathway"/>
    <property type="evidence" value="ECO:0007669"/>
    <property type="project" value="TreeGrafter"/>
</dbReference>
<dbReference type="GO" id="GO:0006457">
    <property type="term" value="P:protein folding"/>
    <property type="evidence" value="ECO:0007669"/>
    <property type="project" value="InterPro"/>
</dbReference>
<dbReference type="GO" id="GO:0050821">
    <property type="term" value="P:protein stabilization"/>
    <property type="evidence" value="ECO:0000250"/>
    <property type="project" value="UniProtKB"/>
</dbReference>
<dbReference type="FunFam" id="2.10.250.10:FF:000002">
    <property type="entry name" value="Calreticulin"/>
    <property type="match status" value="1"/>
</dbReference>
<dbReference type="FunFam" id="2.60.120.200:FF:000113">
    <property type="entry name" value="Calreticulin 3"/>
    <property type="match status" value="1"/>
</dbReference>
<dbReference type="FunFam" id="2.60.120.200:FF:000122">
    <property type="entry name" value="Calreticulin 3"/>
    <property type="match status" value="1"/>
</dbReference>
<dbReference type="Gene3D" id="2.60.120.200">
    <property type="match status" value="1"/>
</dbReference>
<dbReference type="Gene3D" id="2.10.250.10">
    <property type="entry name" value="Calreticulin/calnexin, P domain"/>
    <property type="match status" value="1"/>
</dbReference>
<dbReference type="InterPro" id="IPR001580">
    <property type="entry name" value="Calret/calnex"/>
</dbReference>
<dbReference type="InterPro" id="IPR018124">
    <property type="entry name" value="Calret/calnex_CS"/>
</dbReference>
<dbReference type="InterPro" id="IPR009169">
    <property type="entry name" value="Calreticulin"/>
</dbReference>
<dbReference type="InterPro" id="IPR009033">
    <property type="entry name" value="Calreticulin/calnexin_P_dom_sf"/>
</dbReference>
<dbReference type="InterPro" id="IPR013320">
    <property type="entry name" value="ConA-like_dom_sf"/>
</dbReference>
<dbReference type="PANTHER" id="PTHR11073:SF16">
    <property type="entry name" value="CALRETICULIN"/>
    <property type="match status" value="1"/>
</dbReference>
<dbReference type="PANTHER" id="PTHR11073">
    <property type="entry name" value="CALRETICULIN AND CALNEXIN"/>
    <property type="match status" value="1"/>
</dbReference>
<dbReference type="Pfam" id="PF00262">
    <property type="entry name" value="Calreticulin"/>
    <property type="match status" value="2"/>
</dbReference>
<dbReference type="PIRSF" id="PIRSF002356">
    <property type="entry name" value="Calreticulin"/>
    <property type="match status" value="1"/>
</dbReference>
<dbReference type="PRINTS" id="PR00626">
    <property type="entry name" value="CALRETICULIN"/>
</dbReference>
<dbReference type="SUPFAM" id="SSF49899">
    <property type="entry name" value="Concanavalin A-like lectins/glucanases"/>
    <property type="match status" value="1"/>
</dbReference>
<dbReference type="SUPFAM" id="SSF63887">
    <property type="entry name" value="P-domain of calnexin/calreticulin"/>
    <property type="match status" value="1"/>
</dbReference>
<dbReference type="PROSITE" id="PS00803">
    <property type="entry name" value="CALRETICULIN_1"/>
    <property type="match status" value="1"/>
</dbReference>
<dbReference type="PROSITE" id="PS00804">
    <property type="entry name" value="CALRETICULIN_2"/>
    <property type="match status" value="1"/>
</dbReference>
<dbReference type="PROSITE" id="PS00805">
    <property type="entry name" value="CALRETICULIN_REPEAT"/>
    <property type="match status" value="3"/>
</dbReference>
<dbReference type="PROSITE" id="PS00014">
    <property type="entry name" value="ER_TARGET"/>
    <property type="match status" value="1"/>
</dbReference>
<sequence length="417" mass="48114">MLLSVPLLLGLLGLAAAEPAVYFKEQFLDGDGWTSRWIESKHKSDFGKFVLSSGKFYGDEEKDKGLQTSQDARFYALSASFEPFSNKGQTLVVQFTVKHEQNIDCGGGYVKLFPNSLDQTDMHGDSEYNIMFGPDICGPGTKKVHVIFNYKGKNVLINKDIRCKDDEFTHLYTLIVRPDNTYEVKIDNSQVESGSLEDDWDFLPPKKIKDPDASKPEDWDERAKIDDPTDSKPEDWDKPEHIPDPDAKKPEDWDEEMDGEWEPPVIQNPEYKGEWKPRQIDNPDYKGTWIHPEIDNPEYSPDPSIYAYDNFGVLGLDLWQVKSGTIFDNFLITNDEAYAEEFGNETWGVTKAAEKQMKDKQDEEQRLKEEEEDKKRKEEEEAEDKEDDEDKDEDEEDEEDKEEDEEEDVPGQAKDEL</sequence>
<proteinExistence type="evidence at transcript level"/>